<dbReference type="EMBL" id="CU329672">
    <property type="protein sequence ID" value="CAA21876.1"/>
    <property type="molecule type" value="Genomic_DNA"/>
</dbReference>
<dbReference type="PIR" id="T41501">
    <property type="entry name" value="T41501"/>
</dbReference>
<dbReference type="RefSeq" id="NP_588192.1">
    <property type="nucleotide sequence ID" value="NM_001023182.2"/>
</dbReference>
<dbReference type="SMR" id="O94607"/>
<dbReference type="STRING" id="284812.O94607"/>
<dbReference type="TCDB" id="2.A.1.16.5">
    <property type="family name" value="the major facilitator superfamily (mfs)"/>
</dbReference>
<dbReference type="iPTMnet" id="O94607"/>
<dbReference type="SwissPalm" id="O94607"/>
<dbReference type="PaxDb" id="4896-SPCC61.01c.1"/>
<dbReference type="EnsemblFungi" id="SPCC61.01c.1">
    <property type="protein sequence ID" value="SPCC61.01c.1:pep"/>
    <property type="gene ID" value="SPCC61.01c"/>
</dbReference>
<dbReference type="GeneID" id="2539559"/>
<dbReference type="KEGG" id="spo:2539559"/>
<dbReference type="PomBase" id="SPCC61.01c">
    <property type="gene designation" value="str2"/>
</dbReference>
<dbReference type="VEuPathDB" id="FungiDB:SPCC61.01c"/>
<dbReference type="eggNOG" id="KOG0254">
    <property type="taxonomic scope" value="Eukaryota"/>
</dbReference>
<dbReference type="HOGENOM" id="CLU_012970_2_0_1"/>
<dbReference type="InParanoid" id="O94607"/>
<dbReference type="OMA" id="PWKGKGL"/>
<dbReference type="PhylomeDB" id="O94607"/>
<dbReference type="PRO" id="PR:O94607"/>
<dbReference type="Proteomes" id="UP000002485">
    <property type="component" value="Chromosome III"/>
</dbReference>
<dbReference type="GO" id="GO:0000329">
    <property type="term" value="C:fungal-type vacuole membrane"/>
    <property type="evidence" value="ECO:0007005"/>
    <property type="project" value="PomBase"/>
</dbReference>
<dbReference type="GO" id="GO:0005886">
    <property type="term" value="C:plasma membrane"/>
    <property type="evidence" value="ECO:0000318"/>
    <property type="project" value="GO_Central"/>
</dbReference>
<dbReference type="GO" id="GO:0015343">
    <property type="term" value="F:siderophore-iron transmembrane transporter activity"/>
    <property type="evidence" value="ECO:0000318"/>
    <property type="project" value="GO_Central"/>
</dbReference>
<dbReference type="GO" id="GO:0055085">
    <property type="term" value="P:transmembrane transport"/>
    <property type="evidence" value="ECO:0000318"/>
    <property type="project" value="GO_Central"/>
</dbReference>
<dbReference type="CDD" id="cd17322">
    <property type="entry name" value="MFS_ARN_like"/>
    <property type="match status" value="1"/>
</dbReference>
<dbReference type="FunFam" id="1.20.1250.20:FF:000611">
    <property type="entry name" value="Siderochrome-iron transporter MirC"/>
    <property type="match status" value="1"/>
</dbReference>
<dbReference type="Gene3D" id="1.20.1250.20">
    <property type="entry name" value="MFS general substrate transporter like domains"/>
    <property type="match status" value="2"/>
</dbReference>
<dbReference type="InterPro" id="IPR011701">
    <property type="entry name" value="MFS"/>
</dbReference>
<dbReference type="InterPro" id="IPR020846">
    <property type="entry name" value="MFS_dom"/>
</dbReference>
<dbReference type="InterPro" id="IPR036259">
    <property type="entry name" value="MFS_trans_sf"/>
</dbReference>
<dbReference type="PANTHER" id="PTHR23501">
    <property type="entry name" value="MAJOR FACILITATOR SUPERFAMILY"/>
    <property type="match status" value="1"/>
</dbReference>
<dbReference type="PANTHER" id="PTHR23501:SF87">
    <property type="entry name" value="SIDEROPHORE IRON TRANSPORTER 2"/>
    <property type="match status" value="1"/>
</dbReference>
<dbReference type="Pfam" id="PF07690">
    <property type="entry name" value="MFS_1"/>
    <property type="match status" value="1"/>
</dbReference>
<dbReference type="SUPFAM" id="SSF103473">
    <property type="entry name" value="MFS general substrate transporter"/>
    <property type="match status" value="1"/>
</dbReference>
<dbReference type="PROSITE" id="PS50850">
    <property type="entry name" value="MFS"/>
    <property type="match status" value="1"/>
</dbReference>
<gene>
    <name type="primary">str2</name>
    <name type="ORF">SPCC61.01c</name>
    <name type="ORF">SPCC622.20c</name>
</gene>
<evidence type="ECO:0000255" key="1"/>
<evidence type="ECO:0000269" key="2">
    <source>
    </source>
</evidence>
<evidence type="ECO:0000269" key="3">
    <source>
    </source>
</evidence>
<evidence type="ECO:0000305" key="4"/>
<proteinExistence type="evidence at protein level"/>
<organism>
    <name type="scientific">Schizosaccharomyces pombe (strain 972 / ATCC 24843)</name>
    <name type="common">Fission yeast</name>
    <dbReference type="NCBI Taxonomy" id="284812"/>
    <lineage>
        <taxon>Eukaryota</taxon>
        <taxon>Fungi</taxon>
        <taxon>Dikarya</taxon>
        <taxon>Ascomycota</taxon>
        <taxon>Taphrinomycotina</taxon>
        <taxon>Schizosaccharomycetes</taxon>
        <taxon>Schizosaccharomycetales</taxon>
        <taxon>Schizosaccharomycetaceae</taxon>
        <taxon>Schizosaccharomyces</taxon>
    </lineage>
</organism>
<accession>O94607</accession>
<comment type="function">
    <text evidence="2">Involved in the transport of siderophore iron and so has a role in iron homeostasis.</text>
</comment>
<comment type="subcellular location">
    <subcellularLocation>
        <location evidence="4">Membrane</location>
        <topology evidence="4">Multi-pass membrane protein</topology>
    </subcellularLocation>
</comment>
<comment type="similarity">
    <text evidence="4">Belongs to the major facilitator superfamily.</text>
</comment>
<keyword id="KW-0406">Ion transport</keyword>
<keyword id="KW-0408">Iron</keyword>
<keyword id="KW-0410">Iron transport</keyword>
<keyword id="KW-0472">Membrane</keyword>
<keyword id="KW-0597">Phosphoprotein</keyword>
<keyword id="KW-1185">Reference proteome</keyword>
<keyword id="KW-0812">Transmembrane</keyword>
<keyword id="KW-1133">Transmembrane helix</keyword>
<keyword id="KW-0813">Transport</keyword>
<reference key="1">
    <citation type="journal article" date="2002" name="Nature">
        <title>The genome sequence of Schizosaccharomyces pombe.</title>
        <authorList>
            <person name="Wood V."/>
            <person name="Gwilliam R."/>
            <person name="Rajandream M.A."/>
            <person name="Lyne M.H."/>
            <person name="Lyne R."/>
            <person name="Stewart A."/>
            <person name="Sgouros J.G."/>
            <person name="Peat N."/>
            <person name="Hayles J."/>
            <person name="Baker S.G."/>
            <person name="Basham D."/>
            <person name="Bowman S."/>
            <person name="Brooks K."/>
            <person name="Brown D."/>
            <person name="Brown S."/>
            <person name="Chillingworth T."/>
            <person name="Churcher C.M."/>
            <person name="Collins M."/>
            <person name="Connor R."/>
            <person name="Cronin A."/>
            <person name="Davis P."/>
            <person name="Feltwell T."/>
            <person name="Fraser A."/>
            <person name="Gentles S."/>
            <person name="Goble A."/>
            <person name="Hamlin N."/>
            <person name="Harris D.E."/>
            <person name="Hidalgo J."/>
            <person name="Hodgson G."/>
            <person name="Holroyd S."/>
            <person name="Hornsby T."/>
            <person name="Howarth S."/>
            <person name="Huckle E.J."/>
            <person name="Hunt S."/>
            <person name="Jagels K."/>
            <person name="James K.D."/>
            <person name="Jones L."/>
            <person name="Jones M."/>
            <person name="Leather S."/>
            <person name="McDonald S."/>
            <person name="McLean J."/>
            <person name="Mooney P."/>
            <person name="Moule S."/>
            <person name="Mungall K.L."/>
            <person name="Murphy L.D."/>
            <person name="Niblett D."/>
            <person name="Odell C."/>
            <person name="Oliver K."/>
            <person name="O'Neil S."/>
            <person name="Pearson D."/>
            <person name="Quail M.A."/>
            <person name="Rabbinowitsch E."/>
            <person name="Rutherford K.M."/>
            <person name="Rutter S."/>
            <person name="Saunders D."/>
            <person name="Seeger K."/>
            <person name="Sharp S."/>
            <person name="Skelton J."/>
            <person name="Simmonds M.N."/>
            <person name="Squares R."/>
            <person name="Squares S."/>
            <person name="Stevens K."/>
            <person name="Taylor K."/>
            <person name="Taylor R.G."/>
            <person name="Tivey A."/>
            <person name="Walsh S.V."/>
            <person name="Warren T."/>
            <person name="Whitehead S."/>
            <person name="Woodward J.R."/>
            <person name="Volckaert G."/>
            <person name="Aert R."/>
            <person name="Robben J."/>
            <person name="Grymonprez B."/>
            <person name="Weltjens I."/>
            <person name="Vanstreels E."/>
            <person name="Rieger M."/>
            <person name="Schaefer M."/>
            <person name="Mueller-Auer S."/>
            <person name="Gabel C."/>
            <person name="Fuchs M."/>
            <person name="Duesterhoeft A."/>
            <person name="Fritzc C."/>
            <person name="Holzer E."/>
            <person name="Moestl D."/>
            <person name="Hilbert H."/>
            <person name="Borzym K."/>
            <person name="Langer I."/>
            <person name="Beck A."/>
            <person name="Lehrach H."/>
            <person name="Reinhardt R."/>
            <person name="Pohl T.M."/>
            <person name="Eger P."/>
            <person name="Zimmermann W."/>
            <person name="Wedler H."/>
            <person name="Wambutt R."/>
            <person name="Purnelle B."/>
            <person name="Goffeau A."/>
            <person name="Cadieu E."/>
            <person name="Dreano S."/>
            <person name="Gloux S."/>
            <person name="Lelaure V."/>
            <person name="Mottier S."/>
            <person name="Galibert F."/>
            <person name="Aves S.J."/>
            <person name="Xiang Z."/>
            <person name="Hunt C."/>
            <person name="Moore K."/>
            <person name="Hurst S.M."/>
            <person name="Lucas M."/>
            <person name="Rochet M."/>
            <person name="Gaillardin C."/>
            <person name="Tallada V.A."/>
            <person name="Garzon A."/>
            <person name="Thode G."/>
            <person name="Daga R.R."/>
            <person name="Cruzado L."/>
            <person name="Jimenez J."/>
            <person name="Sanchez M."/>
            <person name="del Rey F."/>
            <person name="Benito J."/>
            <person name="Dominguez A."/>
            <person name="Revuelta J.L."/>
            <person name="Moreno S."/>
            <person name="Armstrong J."/>
            <person name="Forsburg S.L."/>
            <person name="Cerutti L."/>
            <person name="Lowe T."/>
            <person name="McCombie W.R."/>
            <person name="Paulsen I."/>
            <person name="Potashkin J."/>
            <person name="Shpakovski G.V."/>
            <person name="Ussery D."/>
            <person name="Barrell B.G."/>
            <person name="Nurse P."/>
        </authorList>
    </citation>
    <scope>NUCLEOTIDE SEQUENCE [LARGE SCALE GENOMIC DNA]</scope>
    <source>
        <strain>972 / ATCC 24843</strain>
    </source>
</reference>
<reference key="2">
    <citation type="journal article" date="2003" name="Nucleic Acids Res.">
        <title>Fep1 represses expression of the fission yeast Schizosaccharomyces pombe siderophore-iron transport system.</title>
        <authorList>
            <person name="Pelletier B."/>
            <person name="Beaudoin J."/>
            <person name="Philpott C.C."/>
            <person name="Labbe S."/>
        </authorList>
    </citation>
    <scope>FUNCTION</scope>
</reference>
<reference key="3">
    <citation type="journal article" date="2008" name="J. Proteome Res.">
        <title>Phosphoproteome analysis of fission yeast.</title>
        <authorList>
            <person name="Wilson-Grady J.T."/>
            <person name="Villen J."/>
            <person name="Gygi S.P."/>
        </authorList>
    </citation>
    <scope>PHOSPHORYLATION [LARGE SCALE ANALYSIS] AT SER-46</scope>
    <scope>IDENTIFICATION BY MASS SPECTROMETRY</scope>
</reference>
<protein>
    <recommendedName>
        <fullName>Siderophore iron transporter 2</fullName>
    </recommendedName>
</protein>
<sequence>MTENYGSMEHRKKSFRNNENLEQQFHPLREELDNAGPINDRTSELSLEGVSKAEAIASTWSKRSIIVAYLGLYLLSFASSLEQQTTYSLQRYATSNFSAHSNLATINLVGNILLAVVRAPMVKAADVFGRSESLSLALGMTVLGYLSLAFSRNIQMFTVAYILYICGQTGLGLLSQLIIADTSSLLNRGILSAIPELPYLATVWIGPVLAQAFHPEKNYGWRLGYGIWAFILPTVSLPLLASLFLNQRKAKAAGLYREHHNLINHSTPEKLRLFYLFWQELDGLGIVLFVSGFTLLLLPFSHSSQVVSPDSTILTLFTITLSIALLVTLCFYDVKYARYPVFALKSLKDRTILGSCVLIFTYFMSYYIFSNFLTSFLQVSYGLSIDMSSLTLNVFVFSMTTTAILSGFLMKRFGRFKMLLMISVPMYVLGILGIILFGINDNHYTRPLVLVLILAGMGGGLLTLSAQIAVQSVSSHAKLGMNLTLYLTFSSVGGAFGSAIAGGVWSKRLSSRLLHDLKDHLPVPEIESIFRDLRTALSYPQGTQIRNIINVAYTATEKDLFHISLVASLFMFAGLVIIRDVPLSTENHDTAVETPSE</sequence>
<feature type="chain" id="PRO_0000084880" description="Siderophore iron transporter 2">
    <location>
        <begin position="1"/>
        <end position="597"/>
    </location>
</feature>
<feature type="transmembrane region" description="Helical" evidence="1">
    <location>
        <begin position="65"/>
        <end position="85"/>
    </location>
</feature>
<feature type="transmembrane region" description="Helical" evidence="1">
    <location>
        <begin position="97"/>
        <end position="117"/>
    </location>
</feature>
<feature type="transmembrane region" description="Helical" evidence="1">
    <location>
        <begin position="131"/>
        <end position="151"/>
    </location>
</feature>
<feature type="transmembrane region" description="Helical" evidence="1">
    <location>
        <begin position="159"/>
        <end position="179"/>
    </location>
</feature>
<feature type="transmembrane region" description="Helical" evidence="1">
    <location>
        <begin position="190"/>
        <end position="210"/>
    </location>
</feature>
<feature type="transmembrane region" description="Helical" evidence="1">
    <location>
        <begin position="225"/>
        <end position="245"/>
    </location>
</feature>
<feature type="transmembrane region" description="Helical" evidence="1">
    <location>
        <begin position="281"/>
        <end position="301"/>
    </location>
</feature>
<feature type="transmembrane region" description="Helical" evidence="1">
    <location>
        <begin position="312"/>
        <end position="332"/>
    </location>
</feature>
<feature type="transmembrane region" description="Helical" evidence="1">
    <location>
        <begin position="357"/>
        <end position="377"/>
    </location>
</feature>
<feature type="transmembrane region" description="Helical" evidence="1">
    <location>
        <begin position="390"/>
        <end position="410"/>
    </location>
</feature>
<feature type="transmembrane region" description="Helical" evidence="1">
    <location>
        <begin position="419"/>
        <end position="439"/>
    </location>
</feature>
<feature type="transmembrane region" description="Helical" evidence="1">
    <location>
        <begin position="448"/>
        <end position="468"/>
    </location>
</feature>
<feature type="transmembrane region" description="Helical" evidence="1">
    <location>
        <begin position="485"/>
        <end position="505"/>
    </location>
</feature>
<feature type="transmembrane region" description="Helical" evidence="1">
    <location>
        <begin position="558"/>
        <end position="578"/>
    </location>
</feature>
<feature type="modified residue" description="Phosphoserine" evidence="3">
    <location>
        <position position="46"/>
    </location>
</feature>
<name>STR2_SCHPO</name>